<accession>Q731L0</accession>
<comment type="function">
    <text evidence="1">Isomerase that catalyzes the conversion of deoxy-ribose 1-phosphate (dRib-1-P) and ribose 1-phosphate (Rib-1-P) to deoxy-ribose 5-phosphate (dRib-5-P) and ribose 5-phosphate (Rib-5-P), respectively.</text>
</comment>
<comment type="catalytic activity">
    <reaction evidence="1">
        <text>2-deoxy-alpha-D-ribose 1-phosphate = 2-deoxy-D-ribose 5-phosphate</text>
        <dbReference type="Rhea" id="RHEA:27658"/>
        <dbReference type="ChEBI" id="CHEBI:57259"/>
        <dbReference type="ChEBI" id="CHEBI:62877"/>
        <dbReference type="EC" id="5.4.2.7"/>
    </reaction>
</comment>
<comment type="catalytic activity">
    <reaction evidence="1">
        <text>alpha-D-ribose 1-phosphate = D-ribose 5-phosphate</text>
        <dbReference type="Rhea" id="RHEA:18793"/>
        <dbReference type="ChEBI" id="CHEBI:57720"/>
        <dbReference type="ChEBI" id="CHEBI:78346"/>
        <dbReference type="EC" id="5.4.2.7"/>
    </reaction>
</comment>
<comment type="cofactor">
    <cofactor evidence="1">
        <name>Mn(2+)</name>
        <dbReference type="ChEBI" id="CHEBI:29035"/>
    </cofactor>
    <text evidence="1">Binds 2 manganese ions.</text>
</comment>
<comment type="pathway">
    <text evidence="1">Carbohydrate degradation; 2-deoxy-D-ribose 1-phosphate degradation; D-glyceraldehyde 3-phosphate and acetaldehyde from 2-deoxy-alpha-D-ribose 1-phosphate: step 1/2.</text>
</comment>
<comment type="subcellular location">
    <subcellularLocation>
        <location evidence="1">Cytoplasm</location>
    </subcellularLocation>
</comment>
<comment type="similarity">
    <text evidence="1">Belongs to the phosphopentomutase family.</text>
</comment>
<reference key="1">
    <citation type="journal article" date="2004" name="Nucleic Acids Res.">
        <title>The genome sequence of Bacillus cereus ATCC 10987 reveals metabolic adaptations and a large plasmid related to Bacillus anthracis pXO1.</title>
        <authorList>
            <person name="Rasko D.A."/>
            <person name="Ravel J."/>
            <person name="Oekstad O.A."/>
            <person name="Helgason E."/>
            <person name="Cer R.Z."/>
            <person name="Jiang L."/>
            <person name="Shores K.A."/>
            <person name="Fouts D.E."/>
            <person name="Tourasse N.J."/>
            <person name="Angiuoli S.V."/>
            <person name="Kolonay J.F."/>
            <person name="Nelson W.C."/>
            <person name="Kolstoe A.-B."/>
            <person name="Fraser C.M."/>
            <person name="Read T.D."/>
        </authorList>
    </citation>
    <scope>NUCLEOTIDE SEQUENCE [LARGE SCALE GENOMIC DNA]</scope>
    <source>
        <strain>ATCC 10987 / NRS 248</strain>
    </source>
</reference>
<proteinExistence type="inferred from homology"/>
<protein>
    <recommendedName>
        <fullName evidence="1">Phosphopentomutase</fullName>
        <ecNumber evidence="1">5.4.2.7</ecNumber>
    </recommendedName>
    <alternativeName>
        <fullName evidence="1">Phosphodeoxyribomutase</fullName>
    </alternativeName>
</protein>
<keyword id="KW-0963">Cytoplasm</keyword>
<keyword id="KW-0413">Isomerase</keyword>
<keyword id="KW-0464">Manganese</keyword>
<keyword id="KW-0479">Metal-binding</keyword>
<dbReference type="EC" id="5.4.2.7" evidence="1"/>
<dbReference type="EMBL" id="AE017194">
    <property type="protein sequence ID" value="AAS43057.1"/>
    <property type="molecule type" value="Genomic_DNA"/>
</dbReference>
<dbReference type="SMR" id="Q731L0"/>
<dbReference type="KEGG" id="bca:BCE_4156"/>
<dbReference type="HOGENOM" id="CLU_053861_0_0_9"/>
<dbReference type="UniPathway" id="UPA00002">
    <property type="reaction ID" value="UER00467"/>
</dbReference>
<dbReference type="Proteomes" id="UP000002527">
    <property type="component" value="Chromosome"/>
</dbReference>
<dbReference type="GO" id="GO:0005829">
    <property type="term" value="C:cytosol"/>
    <property type="evidence" value="ECO:0007669"/>
    <property type="project" value="TreeGrafter"/>
</dbReference>
<dbReference type="GO" id="GO:0000287">
    <property type="term" value="F:magnesium ion binding"/>
    <property type="evidence" value="ECO:0007669"/>
    <property type="project" value="InterPro"/>
</dbReference>
<dbReference type="GO" id="GO:0030145">
    <property type="term" value="F:manganese ion binding"/>
    <property type="evidence" value="ECO:0007669"/>
    <property type="project" value="UniProtKB-UniRule"/>
</dbReference>
<dbReference type="GO" id="GO:0008973">
    <property type="term" value="F:phosphopentomutase activity"/>
    <property type="evidence" value="ECO:0007669"/>
    <property type="project" value="UniProtKB-UniRule"/>
</dbReference>
<dbReference type="GO" id="GO:0006018">
    <property type="term" value="P:2-deoxyribose 1-phosphate catabolic process"/>
    <property type="evidence" value="ECO:0007669"/>
    <property type="project" value="UniProtKB-UniRule"/>
</dbReference>
<dbReference type="GO" id="GO:0006015">
    <property type="term" value="P:5-phosphoribose 1-diphosphate biosynthetic process"/>
    <property type="evidence" value="ECO:0007669"/>
    <property type="project" value="UniProtKB-UniPathway"/>
</dbReference>
<dbReference type="GO" id="GO:0043094">
    <property type="term" value="P:metabolic compound salvage"/>
    <property type="evidence" value="ECO:0007669"/>
    <property type="project" value="InterPro"/>
</dbReference>
<dbReference type="GO" id="GO:0009117">
    <property type="term" value="P:nucleotide metabolic process"/>
    <property type="evidence" value="ECO:0007669"/>
    <property type="project" value="InterPro"/>
</dbReference>
<dbReference type="CDD" id="cd16009">
    <property type="entry name" value="PPM"/>
    <property type="match status" value="1"/>
</dbReference>
<dbReference type="FunFam" id="3.30.70.1250:FF:000001">
    <property type="entry name" value="Phosphopentomutase"/>
    <property type="match status" value="1"/>
</dbReference>
<dbReference type="Gene3D" id="3.40.720.10">
    <property type="entry name" value="Alkaline Phosphatase, subunit A"/>
    <property type="match status" value="1"/>
</dbReference>
<dbReference type="Gene3D" id="3.30.70.1250">
    <property type="entry name" value="Phosphopentomutase"/>
    <property type="match status" value="1"/>
</dbReference>
<dbReference type="HAMAP" id="MF_00740">
    <property type="entry name" value="Phosphopentomut"/>
    <property type="match status" value="1"/>
</dbReference>
<dbReference type="InterPro" id="IPR017850">
    <property type="entry name" value="Alkaline_phosphatase_core_sf"/>
</dbReference>
<dbReference type="InterPro" id="IPR010045">
    <property type="entry name" value="DeoB"/>
</dbReference>
<dbReference type="InterPro" id="IPR006124">
    <property type="entry name" value="Metalloenzyme"/>
</dbReference>
<dbReference type="InterPro" id="IPR024052">
    <property type="entry name" value="Phosphopentomutase_DeoB_cap_sf"/>
</dbReference>
<dbReference type="NCBIfam" id="TIGR01696">
    <property type="entry name" value="deoB"/>
    <property type="match status" value="1"/>
</dbReference>
<dbReference type="NCBIfam" id="NF003766">
    <property type="entry name" value="PRK05362.1"/>
    <property type="match status" value="1"/>
</dbReference>
<dbReference type="PANTHER" id="PTHR21110">
    <property type="entry name" value="PHOSPHOPENTOMUTASE"/>
    <property type="match status" value="1"/>
</dbReference>
<dbReference type="PANTHER" id="PTHR21110:SF0">
    <property type="entry name" value="PHOSPHOPENTOMUTASE"/>
    <property type="match status" value="1"/>
</dbReference>
<dbReference type="Pfam" id="PF01676">
    <property type="entry name" value="Metalloenzyme"/>
    <property type="match status" value="1"/>
</dbReference>
<dbReference type="PIRSF" id="PIRSF001491">
    <property type="entry name" value="Ppentomutase"/>
    <property type="match status" value="1"/>
</dbReference>
<dbReference type="SUPFAM" id="SSF53649">
    <property type="entry name" value="Alkaline phosphatase-like"/>
    <property type="match status" value="1"/>
</dbReference>
<dbReference type="SUPFAM" id="SSF143856">
    <property type="entry name" value="DeoB insert domain-like"/>
    <property type="match status" value="1"/>
</dbReference>
<feature type="chain" id="PRO_0000258271" description="Phosphopentomutase">
    <location>
        <begin position="1"/>
        <end position="394"/>
    </location>
</feature>
<feature type="binding site" evidence="1">
    <location>
        <position position="13"/>
    </location>
    <ligand>
        <name>Mn(2+)</name>
        <dbReference type="ChEBI" id="CHEBI:29035"/>
        <label>1</label>
    </ligand>
</feature>
<feature type="binding site" evidence="1">
    <location>
        <position position="286"/>
    </location>
    <ligand>
        <name>Mn(2+)</name>
        <dbReference type="ChEBI" id="CHEBI:29035"/>
        <label>2</label>
    </ligand>
</feature>
<feature type="binding site" evidence="1">
    <location>
        <position position="291"/>
    </location>
    <ligand>
        <name>Mn(2+)</name>
        <dbReference type="ChEBI" id="CHEBI:29035"/>
        <label>2</label>
    </ligand>
</feature>
<feature type="binding site" evidence="1">
    <location>
        <position position="327"/>
    </location>
    <ligand>
        <name>Mn(2+)</name>
        <dbReference type="ChEBI" id="CHEBI:29035"/>
        <label>1</label>
    </ligand>
</feature>
<feature type="binding site" evidence="1">
    <location>
        <position position="328"/>
    </location>
    <ligand>
        <name>Mn(2+)</name>
        <dbReference type="ChEBI" id="CHEBI:29035"/>
        <label>1</label>
    </ligand>
</feature>
<feature type="binding site" evidence="1">
    <location>
        <position position="339"/>
    </location>
    <ligand>
        <name>Mn(2+)</name>
        <dbReference type="ChEBI" id="CHEBI:29035"/>
        <label>2</label>
    </ligand>
</feature>
<name>DEOB_BACC1</name>
<organism>
    <name type="scientific">Bacillus cereus (strain ATCC 10987 / NRS 248)</name>
    <dbReference type="NCBI Taxonomy" id="222523"/>
    <lineage>
        <taxon>Bacteria</taxon>
        <taxon>Bacillati</taxon>
        <taxon>Bacillota</taxon>
        <taxon>Bacilli</taxon>
        <taxon>Bacillales</taxon>
        <taxon>Bacillaceae</taxon>
        <taxon>Bacillus</taxon>
        <taxon>Bacillus cereus group</taxon>
    </lineage>
</organism>
<evidence type="ECO:0000255" key="1">
    <source>
        <dbReference type="HAMAP-Rule" id="MF_00740"/>
    </source>
</evidence>
<sequence>MNKYKRIFLVVMDSVGIGEAPDAEQFGDLGSDTIGHIAEHMNGLQMPNMVKLGLGNIREMKGISKVEKPLGYYTKMQEKSTGKDTMTGHWEIMGLYIDTPFQVFPEGFPKELLDELEEKTGRKIIGNKPASGTEILDELGQEQMETGSLIVYTSADSVLQIAAHEEVVPLDELYKICKIARELTLDEKYMVGRVIARPFVGEPGNFTRTPNRHDYALKPFGRTVMNELKDSDYDVIAIGKISDIYDGEGVTESLRTKSNMDGMDKLVDTLNMDFTGLSFLNLVDFDALFGHRRDPQGYGEALQEYDARLPEVFEKLKEDDLLLITADHGNDPVHHGTDHTREYVPLLAYSPSMKEGGKELPLRQTFADIGATVAENFGVKMPEYGTSFLNELKK</sequence>
<gene>
    <name evidence="1" type="primary">deoB</name>
    <name type="ordered locus">BCE_4156</name>
</gene>